<organism>
    <name type="scientific">Escherichia coli O81 (strain ED1a)</name>
    <dbReference type="NCBI Taxonomy" id="585397"/>
    <lineage>
        <taxon>Bacteria</taxon>
        <taxon>Pseudomonadati</taxon>
        <taxon>Pseudomonadota</taxon>
        <taxon>Gammaproteobacteria</taxon>
        <taxon>Enterobacterales</taxon>
        <taxon>Enterobacteriaceae</taxon>
        <taxon>Escherichia</taxon>
    </lineage>
</organism>
<name>WZYE_ECO81</name>
<sequence length="450" mass="51493">MSLLQFSGLFVVWLLCTLFIATLTWFEFRRVRFNFNVFFSLLFLLTFFFGFPLTSVLVFRFDVGVAPPEILLQALLSAGCFYAVYYVTYKTRLRKRVADAPRRPLFTMNRVETNLTWVILMGIALVSVGIFFMHNGFLLFRLNSYSQIFSSEVSGVALKRFFYFFIPAMLVVYFLRQDSKAWLFFLVSTVAFGLLTYMIVGGTRANIIIAFAIFLFIGIIRGWISLWMLAAAGVLGIVGMFWLALKRYGMNVSGDEAFYTFLYLTRDTFSPWENLALLLQNYDNIDFQGLAPIVRDFYVFIPSWLWPGRPSMVLNSANYFTWEVLNNHSGLAISPTLIGSLVVMGGALFIPLGAIVVGLIIKWFDWLYELGNRETNRYKAAILHSFCFGAIFNMIVLAREGLDSFVSRVVFFIVVFGACLMIAKLLYWLFESAGLIHKRTKSSLRTQVEG</sequence>
<feature type="chain" id="PRO_1000148789" description="Probable ECA polymerase">
    <location>
        <begin position="1"/>
        <end position="450"/>
    </location>
</feature>
<feature type="transmembrane region" description="Helical" evidence="1">
    <location>
        <begin position="6"/>
        <end position="26"/>
    </location>
</feature>
<feature type="transmembrane region" description="Helical" evidence="1">
    <location>
        <begin position="37"/>
        <end position="57"/>
    </location>
</feature>
<feature type="transmembrane region" description="Helical" evidence="1">
    <location>
        <begin position="63"/>
        <end position="83"/>
    </location>
</feature>
<feature type="transmembrane region" description="Helical" evidence="1">
    <location>
        <begin position="118"/>
        <end position="138"/>
    </location>
</feature>
<feature type="transmembrane region" description="Helical" evidence="1">
    <location>
        <begin position="155"/>
        <end position="175"/>
    </location>
</feature>
<feature type="transmembrane region" description="Helical" evidence="1">
    <location>
        <begin position="181"/>
        <end position="201"/>
    </location>
</feature>
<feature type="transmembrane region" description="Helical" evidence="1">
    <location>
        <begin position="207"/>
        <end position="227"/>
    </location>
</feature>
<feature type="transmembrane region" description="Helical" evidence="1">
    <location>
        <begin position="228"/>
        <end position="248"/>
    </location>
</feature>
<feature type="transmembrane region" description="Helical" evidence="1">
    <location>
        <begin position="341"/>
        <end position="361"/>
    </location>
</feature>
<feature type="transmembrane region" description="Helical" evidence="1">
    <location>
        <begin position="378"/>
        <end position="398"/>
    </location>
</feature>
<feature type="transmembrane region" description="Helical" evidence="1">
    <location>
        <begin position="410"/>
        <end position="430"/>
    </location>
</feature>
<proteinExistence type="inferred from homology"/>
<dbReference type="EMBL" id="CU928162">
    <property type="protein sequence ID" value="CAR10598.2"/>
    <property type="molecule type" value="Genomic_DNA"/>
</dbReference>
<dbReference type="RefSeq" id="WP_000055119.1">
    <property type="nucleotide sequence ID" value="NC_011745.1"/>
</dbReference>
<dbReference type="KEGG" id="ecq:ECED1_4479"/>
<dbReference type="HOGENOM" id="CLU_049711_0_0_6"/>
<dbReference type="UniPathway" id="UPA00566"/>
<dbReference type="Proteomes" id="UP000000748">
    <property type="component" value="Chromosome"/>
</dbReference>
<dbReference type="GO" id="GO:0005886">
    <property type="term" value="C:plasma membrane"/>
    <property type="evidence" value="ECO:0007669"/>
    <property type="project" value="UniProtKB-SubCell"/>
</dbReference>
<dbReference type="GO" id="GO:0009246">
    <property type="term" value="P:enterobacterial common antigen biosynthetic process"/>
    <property type="evidence" value="ECO:0007669"/>
    <property type="project" value="UniProtKB-UniRule"/>
</dbReference>
<dbReference type="HAMAP" id="MF_01003">
    <property type="entry name" value="WzyE"/>
    <property type="match status" value="1"/>
</dbReference>
<dbReference type="InterPro" id="IPR010691">
    <property type="entry name" value="WzyE"/>
</dbReference>
<dbReference type="NCBIfam" id="NF002820">
    <property type="entry name" value="PRK02975.1"/>
    <property type="match status" value="1"/>
</dbReference>
<dbReference type="Pfam" id="PF06899">
    <property type="entry name" value="WzyE"/>
    <property type="match status" value="1"/>
</dbReference>
<reference key="1">
    <citation type="journal article" date="2009" name="PLoS Genet.">
        <title>Organised genome dynamics in the Escherichia coli species results in highly diverse adaptive paths.</title>
        <authorList>
            <person name="Touchon M."/>
            <person name="Hoede C."/>
            <person name="Tenaillon O."/>
            <person name="Barbe V."/>
            <person name="Baeriswyl S."/>
            <person name="Bidet P."/>
            <person name="Bingen E."/>
            <person name="Bonacorsi S."/>
            <person name="Bouchier C."/>
            <person name="Bouvet O."/>
            <person name="Calteau A."/>
            <person name="Chiapello H."/>
            <person name="Clermont O."/>
            <person name="Cruveiller S."/>
            <person name="Danchin A."/>
            <person name="Diard M."/>
            <person name="Dossat C."/>
            <person name="Karoui M.E."/>
            <person name="Frapy E."/>
            <person name="Garry L."/>
            <person name="Ghigo J.M."/>
            <person name="Gilles A.M."/>
            <person name="Johnson J."/>
            <person name="Le Bouguenec C."/>
            <person name="Lescat M."/>
            <person name="Mangenot S."/>
            <person name="Martinez-Jehanne V."/>
            <person name="Matic I."/>
            <person name="Nassif X."/>
            <person name="Oztas S."/>
            <person name="Petit M.A."/>
            <person name="Pichon C."/>
            <person name="Rouy Z."/>
            <person name="Ruf C.S."/>
            <person name="Schneider D."/>
            <person name="Tourret J."/>
            <person name="Vacherie B."/>
            <person name="Vallenet D."/>
            <person name="Medigue C."/>
            <person name="Rocha E.P.C."/>
            <person name="Denamur E."/>
        </authorList>
    </citation>
    <scope>NUCLEOTIDE SEQUENCE [LARGE SCALE GENOMIC DNA]</scope>
    <source>
        <strain>ED1a</strain>
    </source>
</reference>
<evidence type="ECO:0000255" key="1">
    <source>
        <dbReference type="HAMAP-Rule" id="MF_01003"/>
    </source>
</evidence>
<comment type="function">
    <text evidence="1">Probably involved in the polymerization of enterobacterial common antigen (ECA) trisaccharide repeat units.</text>
</comment>
<comment type="pathway">
    <text evidence="1">Bacterial outer membrane biogenesis; enterobacterial common antigen biosynthesis.</text>
</comment>
<comment type="subunit">
    <text evidence="1">Probably part of a complex composed of WzxE, WzyE and WzzE.</text>
</comment>
<comment type="subcellular location">
    <subcellularLocation>
        <location evidence="1">Cell inner membrane</location>
        <topology evidence="1">Multi-pass membrane protein</topology>
    </subcellularLocation>
</comment>
<comment type="similarity">
    <text evidence="1">Belongs to the WzyE family.</text>
</comment>
<accession>B7MR15</accession>
<protein>
    <recommendedName>
        <fullName evidence="1">Probable ECA polymerase</fullName>
    </recommendedName>
</protein>
<gene>
    <name evidence="1" type="primary">wzyE</name>
    <name type="ordered locus">ECED1_4479</name>
</gene>
<keyword id="KW-0997">Cell inner membrane</keyword>
<keyword id="KW-1003">Cell membrane</keyword>
<keyword id="KW-0472">Membrane</keyword>
<keyword id="KW-0812">Transmembrane</keyword>
<keyword id="KW-1133">Transmembrane helix</keyword>